<comment type="function">
    <text evidence="1">Catalyzes the reversible formation of acyl-phosphate (acyl-PO(4)) from acyl-[acyl-carrier-protein] (acyl-ACP). This enzyme utilizes acyl-ACP as fatty acyl donor, but not acyl-CoA.</text>
</comment>
<comment type="catalytic activity">
    <reaction evidence="1">
        <text>a fatty acyl-[ACP] + phosphate = an acyl phosphate + holo-[ACP]</text>
        <dbReference type="Rhea" id="RHEA:42292"/>
        <dbReference type="Rhea" id="RHEA-COMP:9685"/>
        <dbReference type="Rhea" id="RHEA-COMP:14125"/>
        <dbReference type="ChEBI" id="CHEBI:43474"/>
        <dbReference type="ChEBI" id="CHEBI:59918"/>
        <dbReference type="ChEBI" id="CHEBI:64479"/>
        <dbReference type="ChEBI" id="CHEBI:138651"/>
        <dbReference type="EC" id="2.3.1.274"/>
    </reaction>
</comment>
<comment type="pathway">
    <text evidence="1">Lipid metabolism; phospholipid metabolism.</text>
</comment>
<comment type="subunit">
    <text evidence="1">Homodimer. Probably interacts with PlsY.</text>
</comment>
<comment type="subcellular location">
    <subcellularLocation>
        <location evidence="1">Cytoplasm</location>
    </subcellularLocation>
    <text evidence="1">Associated with the membrane possibly through PlsY.</text>
</comment>
<comment type="similarity">
    <text evidence="1">Belongs to the PlsX family.</text>
</comment>
<sequence>MLKIAIDVMGADNGVTPIVQGVIQALKSRDFNAVIIGDEAQIAPLVPPYLQSRAQIVHCTDYIRMEESASAAAKRTQSSIFKTTELLKNGDVDALVSPGHSGATMSLATLKIGRIKGVSRPAICTTMPNTTDKPSIILDAGANTDCKPEYLVDFAIMGYEYAKNVIGFENPRVGLLSNGEEDNKGNELTKATFKLLKEFSFFKGNVEGRDIFNGSVDVIVCDGFSGNLVLKASEGVASAMSSVLKKDIKSCLCSMFGALFLRGVFKRLKKKMDHSEYGGAPLLGVQKVVIISHGSANARAIECAIYQALNAIESNICSKLSDAFANKPSSAQQ</sequence>
<protein>
    <recommendedName>
        <fullName evidence="1">Phosphate acyltransferase</fullName>
        <ecNumber evidence="1">2.3.1.274</ecNumber>
    </recommendedName>
    <alternativeName>
        <fullName evidence="1">Acyl-ACP phosphotransacylase</fullName>
    </alternativeName>
    <alternativeName>
        <fullName evidence="1">Acyl-[acyl-carrier-protein]--phosphate acyltransferase</fullName>
    </alternativeName>
    <alternativeName>
        <fullName evidence="1">Phosphate-acyl-ACP acyltransferase</fullName>
    </alternativeName>
</protein>
<proteinExistence type="inferred from homology"/>
<reference key="1">
    <citation type="journal article" date="2003" name="Proc. Natl. Acad. Sci. U.S.A.">
        <title>The complete genome sequence of the carcinogenic bacterium Helicobacter hepaticus.</title>
        <authorList>
            <person name="Suerbaum S."/>
            <person name="Josenhans C."/>
            <person name="Sterzenbach T."/>
            <person name="Drescher B."/>
            <person name="Brandt P."/>
            <person name="Bell M."/>
            <person name="Droege M."/>
            <person name="Fartmann B."/>
            <person name="Fischer H.-P."/>
            <person name="Ge Z."/>
            <person name="Hoerster A."/>
            <person name="Holland R."/>
            <person name="Klein K."/>
            <person name="Koenig J."/>
            <person name="Macko L."/>
            <person name="Mendz G.L."/>
            <person name="Nyakatura G."/>
            <person name="Schauer D.B."/>
            <person name="Shen Z."/>
            <person name="Weber J."/>
            <person name="Frosch M."/>
            <person name="Fox J.G."/>
        </authorList>
    </citation>
    <scope>NUCLEOTIDE SEQUENCE [LARGE SCALE GENOMIC DNA]</scope>
    <source>
        <strain>ATCC 51449 / 3B1</strain>
    </source>
</reference>
<feature type="chain" id="PRO_0000189886" description="Phosphate acyltransferase">
    <location>
        <begin position="1"/>
        <end position="333"/>
    </location>
</feature>
<evidence type="ECO:0000255" key="1">
    <source>
        <dbReference type="HAMAP-Rule" id="MF_00019"/>
    </source>
</evidence>
<name>PLSX_HELHP</name>
<organism>
    <name type="scientific">Helicobacter hepaticus (strain ATCC 51449 / 3B1)</name>
    <dbReference type="NCBI Taxonomy" id="235279"/>
    <lineage>
        <taxon>Bacteria</taxon>
        <taxon>Pseudomonadati</taxon>
        <taxon>Campylobacterota</taxon>
        <taxon>Epsilonproteobacteria</taxon>
        <taxon>Campylobacterales</taxon>
        <taxon>Helicobacteraceae</taxon>
        <taxon>Helicobacter</taxon>
    </lineage>
</organism>
<keyword id="KW-0963">Cytoplasm</keyword>
<keyword id="KW-0444">Lipid biosynthesis</keyword>
<keyword id="KW-0443">Lipid metabolism</keyword>
<keyword id="KW-0594">Phospholipid biosynthesis</keyword>
<keyword id="KW-1208">Phospholipid metabolism</keyword>
<keyword id="KW-1185">Reference proteome</keyword>
<keyword id="KW-0808">Transferase</keyword>
<gene>
    <name evidence="1" type="primary">plsX</name>
    <name type="ordered locus">HH_0680</name>
</gene>
<accession>Q7VIC6</accession>
<dbReference type="EC" id="2.3.1.274" evidence="1"/>
<dbReference type="EMBL" id="AE017125">
    <property type="protein sequence ID" value="AAP77277.1"/>
    <property type="molecule type" value="Genomic_DNA"/>
</dbReference>
<dbReference type="RefSeq" id="WP_011115522.1">
    <property type="nucleotide sequence ID" value="NC_004917.1"/>
</dbReference>
<dbReference type="SMR" id="Q7VIC6"/>
<dbReference type="STRING" id="235279.HH_0680"/>
<dbReference type="KEGG" id="hhe:HH_0680"/>
<dbReference type="eggNOG" id="COG0416">
    <property type="taxonomic scope" value="Bacteria"/>
</dbReference>
<dbReference type="HOGENOM" id="CLU_039379_1_1_7"/>
<dbReference type="OrthoDB" id="9806408at2"/>
<dbReference type="UniPathway" id="UPA00085"/>
<dbReference type="Proteomes" id="UP000002495">
    <property type="component" value="Chromosome"/>
</dbReference>
<dbReference type="GO" id="GO:0005737">
    <property type="term" value="C:cytoplasm"/>
    <property type="evidence" value="ECO:0007669"/>
    <property type="project" value="UniProtKB-SubCell"/>
</dbReference>
<dbReference type="GO" id="GO:0043811">
    <property type="term" value="F:phosphate:acyl-[acyl carrier protein] acyltransferase activity"/>
    <property type="evidence" value="ECO:0007669"/>
    <property type="project" value="UniProtKB-UniRule"/>
</dbReference>
<dbReference type="GO" id="GO:0006633">
    <property type="term" value="P:fatty acid biosynthetic process"/>
    <property type="evidence" value="ECO:0007669"/>
    <property type="project" value="UniProtKB-UniRule"/>
</dbReference>
<dbReference type="GO" id="GO:0008654">
    <property type="term" value="P:phospholipid biosynthetic process"/>
    <property type="evidence" value="ECO:0007669"/>
    <property type="project" value="UniProtKB-KW"/>
</dbReference>
<dbReference type="Gene3D" id="3.40.718.10">
    <property type="entry name" value="Isopropylmalate Dehydrogenase"/>
    <property type="match status" value="1"/>
</dbReference>
<dbReference type="HAMAP" id="MF_00019">
    <property type="entry name" value="PlsX"/>
    <property type="match status" value="1"/>
</dbReference>
<dbReference type="InterPro" id="IPR003664">
    <property type="entry name" value="FA_synthesis"/>
</dbReference>
<dbReference type="InterPro" id="IPR012281">
    <property type="entry name" value="Phospholipid_synth_PlsX-like"/>
</dbReference>
<dbReference type="NCBIfam" id="TIGR00182">
    <property type="entry name" value="plsX"/>
    <property type="match status" value="1"/>
</dbReference>
<dbReference type="PANTHER" id="PTHR30100">
    <property type="entry name" value="FATTY ACID/PHOSPHOLIPID SYNTHESIS PROTEIN PLSX"/>
    <property type="match status" value="1"/>
</dbReference>
<dbReference type="PANTHER" id="PTHR30100:SF1">
    <property type="entry name" value="PHOSPHATE ACYLTRANSFERASE"/>
    <property type="match status" value="1"/>
</dbReference>
<dbReference type="Pfam" id="PF02504">
    <property type="entry name" value="FA_synthesis"/>
    <property type="match status" value="1"/>
</dbReference>
<dbReference type="PIRSF" id="PIRSF002465">
    <property type="entry name" value="Phsphlp_syn_PlsX"/>
    <property type="match status" value="1"/>
</dbReference>
<dbReference type="SUPFAM" id="SSF53659">
    <property type="entry name" value="Isocitrate/Isopropylmalate dehydrogenase-like"/>
    <property type="match status" value="1"/>
</dbReference>